<proteinExistence type="inferred from homology"/>
<organism>
    <name type="scientific">Pyrococcus abyssi (strain GE5 / Orsay)</name>
    <dbReference type="NCBI Taxonomy" id="272844"/>
    <lineage>
        <taxon>Archaea</taxon>
        <taxon>Methanobacteriati</taxon>
        <taxon>Methanobacteriota</taxon>
        <taxon>Thermococci</taxon>
        <taxon>Thermococcales</taxon>
        <taxon>Thermococcaceae</taxon>
        <taxon>Pyrococcus</taxon>
    </lineage>
</organism>
<accession>Q9V0X6</accession>
<accession>G8ZJC1</accession>
<protein>
    <recommendedName>
        <fullName>Probable S-adenosyl-L-methionine-binding protein PYRAB06630</fullName>
    </recommendedName>
</protein>
<dbReference type="EMBL" id="AJ248285">
    <property type="protein sequence ID" value="CAB49576.1"/>
    <property type="molecule type" value="Genomic_DNA"/>
</dbReference>
<dbReference type="EMBL" id="HE613800">
    <property type="protein sequence ID" value="CCE70048.1"/>
    <property type="molecule type" value="Genomic_DNA"/>
</dbReference>
<dbReference type="PIR" id="G75107">
    <property type="entry name" value="G75107"/>
</dbReference>
<dbReference type="SMR" id="Q9V0X6"/>
<dbReference type="STRING" id="272844.PAB0452"/>
<dbReference type="KEGG" id="pab:PAB0452"/>
<dbReference type="eggNOG" id="arCOG00761">
    <property type="taxonomic scope" value="Archaea"/>
</dbReference>
<dbReference type="HOGENOM" id="CLU_013458_2_0_2"/>
<dbReference type="PhylomeDB" id="Q9V0X6"/>
<dbReference type="Proteomes" id="UP000000810">
    <property type="component" value="Chromosome"/>
</dbReference>
<dbReference type="Proteomes" id="UP000009139">
    <property type="component" value="Chromosome"/>
</dbReference>
<dbReference type="CDD" id="cd09281">
    <property type="entry name" value="UPF0066"/>
    <property type="match status" value="1"/>
</dbReference>
<dbReference type="Gene3D" id="2.40.30.70">
    <property type="entry name" value="YaeB-like"/>
    <property type="match status" value="1"/>
</dbReference>
<dbReference type="InterPro" id="IPR023370">
    <property type="entry name" value="TrmO-like_N"/>
</dbReference>
<dbReference type="InterPro" id="IPR023368">
    <property type="entry name" value="UPF0066_cons_site"/>
</dbReference>
<dbReference type="InterPro" id="IPR040372">
    <property type="entry name" value="YaeB-like"/>
</dbReference>
<dbReference type="InterPro" id="IPR036413">
    <property type="entry name" value="YaeB-like_sf"/>
</dbReference>
<dbReference type="InterPro" id="IPR036414">
    <property type="entry name" value="YaeB_N_sf"/>
</dbReference>
<dbReference type="NCBIfam" id="TIGR00104">
    <property type="entry name" value="tRNA_TsaA"/>
    <property type="match status" value="1"/>
</dbReference>
<dbReference type="PANTHER" id="PTHR12818">
    <property type="entry name" value="TRNA (ADENINE(37)-N6)-METHYLTRANSFERASE"/>
    <property type="match status" value="1"/>
</dbReference>
<dbReference type="PANTHER" id="PTHR12818:SF0">
    <property type="entry name" value="TRNA (ADENINE(37)-N6)-METHYLTRANSFERASE"/>
    <property type="match status" value="1"/>
</dbReference>
<dbReference type="Pfam" id="PF01980">
    <property type="entry name" value="TrmO_N"/>
    <property type="match status" value="1"/>
</dbReference>
<dbReference type="SUPFAM" id="SSF118196">
    <property type="entry name" value="YaeB-like"/>
    <property type="match status" value="1"/>
</dbReference>
<dbReference type="PROSITE" id="PS01318">
    <property type="entry name" value="TSAA_1"/>
    <property type="match status" value="1"/>
</dbReference>
<dbReference type="PROSITE" id="PS51668">
    <property type="entry name" value="TSAA_2"/>
    <property type="match status" value="1"/>
</dbReference>
<sequence length="184" mass="21169">MVLPLMICYRPIGIIHSPFKEPKDVPIQASAAKDIEGTVEVFPEFSEGLKDIEEFSHIILIYHFHRAKFKGLLVEPYMHEEKHGVFATRAPARPNPIGISVVRLVERKGNILRIRDVDILDGTPLLDIKPYVPEFDVRENVRIGWLEKNVHKLEKARDDGRFFSLNFNYIFPASLLEAPERAKL</sequence>
<evidence type="ECO:0000250" key="1">
    <source>
        <dbReference type="UniProtKB" id="Q6NDF6"/>
    </source>
</evidence>
<evidence type="ECO:0000255" key="2">
    <source>
        <dbReference type="PROSITE-ProRule" id="PRU01003"/>
    </source>
</evidence>
<evidence type="ECO:0000305" key="3"/>
<gene>
    <name type="ordered locus">PYRAB06630</name>
    <name type="ORF">PAB0452</name>
</gene>
<name>Y663_PYRAB</name>
<keyword id="KW-0949">S-adenosyl-L-methionine</keyword>
<reference key="1">
    <citation type="journal article" date="2003" name="Mol. Microbiol.">
        <title>An integrated analysis of the genome of the hyperthermophilic archaeon Pyrococcus abyssi.</title>
        <authorList>
            <person name="Cohen G.N."/>
            <person name="Barbe V."/>
            <person name="Flament D."/>
            <person name="Galperin M."/>
            <person name="Heilig R."/>
            <person name="Lecompte O."/>
            <person name="Poch O."/>
            <person name="Prieur D."/>
            <person name="Querellou J."/>
            <person name="Ripp R."/>
            <person name="Thierry J.-C."/>
            <person name="Van der Oost J."/>
            <person name="Weissenbach J."/>
            <person name="Zivanovic Y."/>
            <person name="Forterre P."/>
        </authorList>
    </citation>
    <scope>NUCLEOTIDE SEQUENCE [LARGE SCALE GENOMIC DNA]</scope>
    <source>
        <strain>GE5 / Orsay</strain>
    </source>
</reference>
<reference key="2">
    <citation type="journal article" date="2012" name="Curr. Microbiol.">
        <title>Re-annotation of two hyperthermophilic archaea Pyrococcus abyssi GE5 and Pyrococcus furiosus DSM 3638.</title>
        <authorList>
            <person name="Gao J."/>
            <person name="Wang J."/>
        </authorList>
    </citation>
    <scope>GENOME REANNOTATION</scope>
    <source>
        <strain>GE5 / Orsay</strain>
    </source>
</reference>
<feature type="chain" id="PRO_0000155625" description="Probable S-adenosyl-L-methionine-binding protein PYRAB06630">
    <location>
        <begin position="1"/>
        <end position="184"/>
    </location>
</feature>
<feature type="domain" description="TsaA-like" evidence="2">
    <location>
        <begin position="9"/>
        <end position="140"/>
    </location>
</feature>
<feature type="binding site" evidence="1">
    <location>
        <begin position="26"/>
        <end position="28"/>
    </location>
    <ligand>
        <name>S-adenosyl-L-methionine</name>
        <dbReference type="ChEBI" id="CHEBI:59789"/>
    </ligand>
</feature>
<feature type="binding site" evidence="1">
    <location>
        <begin position="65"/>
        <end position="66"/>
    </location>
    <ligand>
        <name>S-adenosyl-L-methionine</name>
        <dbReference type="ChEBI" id="CHEBI:59789"/>
    </ligand>
</feature>
<feature type="binding site" evidence="1">
    <location>
        <position position="89"/>
    </location>
    <ligand>
        <name>S-adenosyl-L-methionine</name>
        <dbReference type="ChEBI" id="CHEBI:59789"/>
    </ligand>
</feature>
<feature type="binding site" evidence="1">
    <location>
        <begin position="120"/>
        <end position="123"/>
    </location>
    <ligand>
        <name>S-adenosyl-L-methionine</name>
        <dbReference type="ChEBI" id="CHEBI:59789"/>
    </ligand>
</feature>
<comment type="similarity">
    <text evidence="3">Belongs to the tRNA methyltransferase O family.</text>
</comment>